<name>LSPA_SHIDS</name>
<accession>Q32K70</accession>
<feature type="chain" id="PRO_0000289424" description="Lipoprotein signal peptidase">
    <location>
        <begin position="1"/>
        <end position="164"/>
    </location>
</feature>
<feature type="transmembrane region" description="Helical" evidence="1">
    <location>
        <begin position="12"/>
        <end position="32"/>
    </location>
</feature>
<feature type="transmembrane region" description="Helical" evidence="1">
    <location>
        <begin position="70"/>
        <end position="90"/>
    </location>
</feature>
<feature type="transmembrane region" description="Helical" evidence="1">
    <location>
        <begin position="102"/>
        <end position="122"/>
    </location>
</feature>
<feature type="transmembrane region" description="Helical" evidence="1">
    <location>
        <begin position="137"/>
        <end position="157"/>
    </location>
</feature>
<feature type="active site" evidence="1">
    <location>
        <position position="123"/>
    </location>
</feature>
<feature type="active site" evidence="1">
    <location>
        <position position="141"/>
    </location>
</feature>
<protein>
    <recommendedName>
        <fullName evidence="1">Lipoprotein signal peptidase</fullName>
        <ecNumber evidence="1">3.4.23.36</ecNumber>
    </recommendedName>
    <alternativeName>
        <fullName evidence="1">Prolipoprotein signal peptidase</fullName>
    </alternativeName>
    <alternativeName>
        <fullName evidence="1">Signal peptidase II</fullName>
        <shortName evidence="1">SPase II</shortName>
    </alternativeName>
</protein>
<sequence length="164" mass="18128">MSQSICSTGLRWLWLVVVVLIIDLGSKYLILQNFALGDTVPLFPSLNLHYARNYGAAFSFLADSGGWQRWFFAGIAIGISVILAVMMYRSKATQKLNNIAYALIIGGALGNLFDRLWHGFVVDMIDFYVGDWHFATFNLADTAICVGAALIVLEGFLPSKAKKQ</sequence>
<dbReference type="EC" id="3.4.23.36" evidence="1"/>
<dbReference type="EMBL" id="CP000034">
    <property type="protein sequence ID" value="ABB60287.1"/>
    <property type="molecule type" value="Genomic_DNA"/>
</dbReference>
<dbReference type="RefSeq" id="WP_000083369.1">
    <property type="nucleotide sequence ID" value="NC_007606.1"/>
</dbReference>
<dbReference type="RefSeq" id="YP_401776.1">
    <property type="nucleotide sequence ID" value="NC_007606.1"/>
</dbReference>
<dbReference type="SMR" id="Q32K70"/>
<dbReference type="STRING" id="300267.SDY_0049"/>
<dbReference type="MEROPS" id="A08.001"/>
<dbReference type="EnsemblBacteria" id="ABB60287">
    <property type="protein sequence ID" value="ABB60287"/>
    <property type="gene ID" value="SDY_0049"/>
</dbReference>
<dbReference type="GeneID" id="75169926"/>
<dbReference type="KEGG" id="sdy:SDY_0049"/>
<dbReference type="PATRIC" id="fig|300267.13.peg.53"/>
<dbReference type="HOGENOM" id="CLU_083252_4_0_6"/>
<dbReference type="UniPathway" id="UPA00665"/>
<dbReference type="Proteomes" id="UP000002716">
    <property type="component" value="Chromosome"/>
</dbReference>
<dbReference type="GO" id="GO:0005886">
    <property type="term" value="C:plasma membrane"/>
    <property type="evidence" value="ECO:0007669"/>
    <property type="project" value="UniProtKB-SubCell"/>
</dbReference>
<dbReference type="GO" id="GO:0004190">
    <property type="term" value="F:aspartic-type endopeptidase activity"/>
    <property type="evidence" value="ECO:0007669"/>
    <property type="project" value="UniProtKB-UniRule"/>
</dbReference>
<dbReference type="GO" id="GO:0006508">
    <property type="term" value="P:proteolysis"/>
    <property type="evidence" value="ECO:0007669"/>
    <property type="project" value="UniProtKB-KW"/>
</dbReference>
<dbReference type="HAMAP" id="MF_00161">
    <property type="entry name" value="LspA"/>
    <property type="match status" value="1"/>
</dbReference>
<dbReference type="InterPro" id="IPR001872">
    <property type="entry name" value="Peptidase_A8"/>
</dbReference>
<dbReference type="NCBIfam" id="TIGR00077">
    <property type="entry name" value="lspA"/>
    <property type="match status" value="1"/>
</dbReference>
<dbReference type="PANTHER" id="PTHR33695">
    <property type="entry name" value="LIPOPROTEIN SIGNAL PEPTIDASE"/>
    <property type="match status" value="1"/>
</dbReference>
<dbReference type="PANTHER" id="PTHR33695:SF1">
    <property type="entry name" value="LIPOPROTEIN SIGNAL PEPTIDASE"/>
    <property type="match status" value="1"/>
</dbReference>
<dbReference type="Pfam" id="PF01252">
    <property type="entry name" value="Peptidase_A8"/>
    <property type="match status" value="1"/>
</dbReference>
<dbReference type="PRINTS" id="PR00781">
    <property type="entry name" value="LIPOSIGPTASE"/>
</dbReference>
<dbReference type="PROSITE" id="PS00855">
    <property type="entry name" value="SPASE_II"/>
    <property type="match status" value="1"/>
</dbReference>
<keyword id="KW-0064">Aspartyl protease</keyword>
<keyword id="KW-0997">Cell inner membrane</keyword>
<keyword id="KW-1003">Cell membrane</keyword>
<keyword id="KW-0378">Hydrolase</keyword>
<keyword id="KW-0472">Membrane</keyword>
<keyword id="KW-0645">Protease</keyword>
<keyword id="KW-1185">Reference proteome</keyword>
<keyword id="KW-0812">Transmembrane</keyword>
<keyword id="KW-1133">Transmembrane helix</keyword>
<comment type="function">
    <text evidence="1">This protein specifically catalyzes the removal of signal peptides from prolipoproteins.</text>
</comment>
<comment type="catalytic activity">
    <reaction evidence="1">
        <text>Release of signal peptides from bacterial membrane prolipoproteins. Hydrolyzes -Xaa-Yaa-Zaa-|-(S,diacylglyceryl)Cys-, in which Xaa is hydrophobic (preferably Leu), and Yaa (Ala or Ser) and Zaa (Gly or Ala) have small, neutral side chains.</text>
        <dbReference type="EC" id="3.4.23.36"/>
    </reaction>
</comment>
<comment type="pathway">
    <text evidence="1">Protein modification; lipoprotein biosynthesis (signal peptide cleavage).</text>
</comment>
<comment type="subcellular location">
    <subcellularLocation>
        <location evidence="1">Cell inner membrane</location>
        <topology evidence="1">Multi-pass membrane protein</topology>
    </subcellularLocation>
</comment>
<comment type="similarity">
    <text evidence="1">Belongs to the peptidase A8 family.</text>
</comment>
<gene>
    <name evidence="1" type="primary">lspA</name>
    <name type="ordered locus">SDY_0049</name>
</gene>
<reference key="1">
    <citation type="journal article" date="2005" name="Nucleic Acids Res.">
        <title>Genome dynamics and diversity of Shigella species, the etiologic agents of bacillary dysentery.</title>
        <authorList>
            <person name="Yang F."/>
            <person name="Yang J."/>
            <person name="Zhang X."/>
            <person name="Chen L."/>
            <person name="Jiang Y."/>
            <person name="Yan Y."/>
            <person name="Tang X."/>
            <person name="Wang J."/>
            <person name="Xiong Z."/>
            <person name="Dong J."/>
            <person name="Xue Y."/>
            <person name="Zhu Y."/>
            <person name="Xu X."/>
            <person name="Sun L."/>
            <person name="Chen S."/>
            <person name="Nie H."/>
            <person name="Peng J."/>
            <person name="Xu J."/>
            <person name="Wang Y."/>
            <person name="Yuan Z."/>
            <person name="Wen Y."/>
            <person name="Yao Z."/>
            <person name="Shen Y."/>
            <person name="Qiang B."/>
            <person name="Hou Y."/>
            <person name="Yu J."/>
            <person name="Jin Q."/>
        </authorList>
    </citation>
    <scope>NUCLEOTIDE SEQUENCE [LARGE SCALE GENOMIC DNA]</scope>
    <source>
        <strain>Sd197</strain>
    </source>
</reference>
<organism>
    <name type="scientific">Shigella dysenteriae serotype 1 (strain Sd197)</name>
    <dbReference type="NCBI Taxonomy" id="300267"/>
    <lineage>
        <taxon>Bacteria</taxon>
        <taxon>Pseudomonadati</taxon>
        <taxon>Pseudomonadota</taxon>
        <taxon>Gammaproteobacteria</taxon>
        <taxon>Enterobacterales</taxon>
        <taxon>Enterobacteriaceae</taxon>
        <taxon>Shigella</taxon>
    </lineage>
</organism>
<proteinExistence type="inferred from homology"/>
<evidence type="ECO:0000255" key="1">
    <source>
        <dbReference type="HAMAP-Rule" id="MF_00161"/>
    </source>
</evidence>